<dbReference type="EC" id="3.1.3.16"/>
<dbReference type="EMBL" id="BC099142">
    <property type="protein sequence ID" value="AAH99142.1"/>
    <property type="molecule type" value="mRNA"/>
</dbReference>
<dbReference type="RefSeq" id="NP_001020828.1">
    <property type="nucleotide sequence ID" value="NM_001025657.1"/>
</dbReference>
<dbReference type="SMR" id="Q4KLK9"/>
<dbReference type="FunCoup" id="Q4KLK9">
    <property type="interactions" value="3691"/>
</dbReference>
<dbReference type="STRING" id="10116.ENSRNOP00000024349"/>
<dbReference type="iPTMnet" id="Q4KLK9"/>
<dbReference type="PhosphoSitePlus" id="Q4KLK9"/>
<dbReference type="PaxDb" id="10116-ENSRNOP00000024349"/>
<dbReference type="Ensembl" id="ENSRNOT00000024349.6">
    <property type="protein sequence ID" value="ENSRNOP00000024349.4"/>
    <property type="gene ID" value="ENSRNOG00000017829.6"/>
</dbReference>
<dbReference type="GeneID" id="298681"/>
<dbReference type="KEGG" id="rno:298681"/>
<dbReference type="AGR" id="RGD:1307854"/>
<dbReference type="CTD" id="29101"/>
<dbReference type="RGD" id="1307854">
    <property type="gene designation" value="Ssu72"/>
</dbReference>
<dbReference type="eggNOG" id="KOG2424">
    <property type="taxonomic scope" value="Eukaryota"/>
</dbReference>
<dbReference type="GeneTree" id="ENSGT00390000010165"/>
<dbReference type="HOGENOM" id="CLU_062463_2_1_1"/>
<dbReference type="InParanoid" id="Q4KLK9"/>
<dbReference type="OMA" id="PNCYEFG"/>
<dbReference type="OrthoDB" id="57957at2759"/>
<dbReference type="PhylomeDB" id="Q4KLK9"/>
<dbReference type="TreeFam" id="TF300194"/>
<dbReference type="Reactome" id="R-RNO-6807505">
    <property type="pathway name" value="RNA polymerase II transcribes snRNA genes"/>
</dbReference>
<dbReference type="PRO" id="PR:Q4KLK9"/>
<dbReference type="Proteomes" id="UP000002494">
    <property type="component" value="Chromosome 5"/>
</dbReference>
<dbReference type="Bgee" id="ENSRNOG00000017829">
    <property type="expression patterns" value="Expressed in ovary and 20 other cell types or tissues"/>
</dbReference>
<dbReference type="GO" id="GO:0005829">
    <property type="term" value="C:cytosol"/>
    <property type="evidence" value="ECO:0007669"/>
    <property type="project" value="Ensembl"/>
</dbReference>
<dbReference type="GO" id="GO:0005847">
    <property type="term" value="C:mRNA cleavage and polyadenylation specificity factor complex"/>
    <property type="evidence" value="ECO:0000318"/>
    <property type="project" value="GO_Central"/>
</dbReference>
<dbReference type="GO" id="GO:0005654">
    <property type="term" value="C:nucleoplasm"/>
    <property type="evidence" value="ECO:0007669"/>
    <property type="project" value="Ensembl"/>
</dbReference>
<dbReference type="GO" id="GO:0008420">
    <property type="term" value="F:RNA polymerase II CTD heptapeptide repeat phosphatase activity"/>
    <property type="evidence" value="ECO:0000250"/>
    <property type="project" value="UniProtKB"/>
</dbReference>
<dbReference type="GO" id="GO:0180010">
    <property type="term" value="P:co-transcriptional mRNA 3'-end processing, cleavage and polyadenylation pathway"/>
    <property type="evidence" value="ECO:0000250"/>
    <property type="project" value="UniProtKB"/>
</dbReference>
<dbReference type="GO" id="GO:0006369">
    <property type="term" value="P:termination of RNA polymerase II transcription"/>
    <property type="evidence" value="ECO:0000318"/>
    <property type="project" value="GO_Central"/>
</dbReference>
<dbReference type="FunFam" id="3.40.50.2300:FF:000039">
    <property type="entry name" value="RNA polymerase II subunit A C-terminal domain phosphatase"/>
    <property type="match status" value="1"/>
</dbReference>
<dbReference type="FunFam" id="3.40.50.2300:FF:000066">
    <property type="entry name" value="RNA polymerase II subunit A C-terminal domain phosphatase SSU72"/>
    <property type="match status" value="1"/>
</dbReference>
<dbReference type="Gene3D" id="3.40.50.2300">
    <property type="match status" value="2"/>
</dbReference>
<dbReference type="InterPro" id="IPR006811">
    <property type="entry name" value="RNA_pol_II_suA"/>
</dbReference>
<dbReference type="PANTHER" id="PTHR20383">
    <property type="entry name" value="RNA POLYMERASE II SUBUNIT A C-TERMINAL DOMAIN PHOSPHATASE"/>
    <property type="match status" value="1"/>
</dbReference>
<dbReference type="Pfam" id="PF04722">
    <property type="entry name" value="Ssu72"/>
    <property type="match status" value="1"/>
</dbReference>
<feature type="chain" id="PRO_0000330014" description="RNA polymerase II subunit A C-terminal domain phosphatase SSU72">
    <location>
        <begin position="1"/>
        <end position="194"/>
    </location>
</feature>
<feature type="coiled-coil region" evidence="3">
    <location>
        <begin position="160"/>
        <end position="187"/>
    </location>
</feature>
<proteinExistence type="evidence at transcript level"/>
<name>SSU72_RAT</name>
<keyword id="KW-0175">Coiled coil</keyword>
<keyword id="KW-0963">Cytoplasm</keyword>
<keyword id="KW-0378">Hydrolase</keyword>
<keyword id="KW-0507">mRNA processing</keyword>
<keyword id="KW-0539">Nucleus</keyword>
<keyword id="KW-0904">Protein phosphatase</keyword>
<keyword id="KW-1185">Reference proteome</keyword>
<reference key="1">
    <citation type="journal article" date="2004" name="Genome Res.">
        <title>The status, quality, and expansion of the NIH full-length cDNA project: the Mammalian Gene Collection (MGC).</title>
        <authorList>
            <consortium name="The MGC Project Team"/>
        </authorList>
    </citation>
    <scope>NUCLEOTIDE SEQUENCE [LARGE SCALE MRNA]</scope>
    <source>
        <tissue>Ovary</tissue>
    </source>
</reference>
<gene>
    <name type="primary">Ssu72</name>
</gene>
<protein>
    <recommendedName>
        <fullName>RNA polymerase II subunit A C-terminal domain phosphatase SSU72</fullName>
        <shortName>CTD phosphatase SSU72</shortName>
        <ecNumber>3.1.3.16</ecNumber>
    </recommendedName>
</protein>
<accession>Q4KLK9</accession>
<comment type="function">
    <text evidence="1">Protein phosphatase that catalyzes the dephosphorylation of the C-terminal domain of RNA polymerase II. Plays a role in RNA processing and termination. Plays a role in pre-mRNA polyadenylation via its interaction with SYMPK (By similarity).</text>
</comment>
<comment type="catalytic activity">
    <reaction>
        <text>O-phospho-L-seryl-[protein] + H2O = L-seryl-[protein] + phosphate</text>
        <dbReference type="Rhea" id="RHEA:20629"/>
        <dbReference type="Rhea" id="RHEA-COMP:9863"/>
        <dbReference type="Rhea" id="RHEA-COMP:11604"/>
        <dbReference type="ChEBI" id="CHEBI:15377"/>
        <dbReference type="ChEBI" id="CHEBI:29999"/>
        <dbReference type="ChEBI" id="CHEBI:43474"/>
        <dbReference type="ChEBI" id="CHEBI:83421"/>
        <dbReference type="EC" id="3.1.3.16"/>
    </reaction>
</comment>
<comment type="catalytic activity">
    <reaction>
        <text>O-phospho-L-threonyl-[protein] + H2O = L-threonyl-[protein] + phosphate</text>
        <dbReference type="Rhea" id="RHEA:47004"/>
        <dbReference type="Rhea" id="RHEA-COMP:11060"/>
        <dbReference type="Rhea" id="RHEA-COMP:11605"/>
        <dbReference type="ChEBI" id="CHEBI:15377"/>
        <dbReference type="ChEBI" id="CHEBI:30013"/>
        <dbReference type="ChEBI" id="CHEBI:43474"/>
        <dbReference type="ChEBI" id="CHEBI:61977"/>
        <dbReference type="EC" id="3.1.3.16"/>
    </reaction>
</comment>
<comment type="subunit">
    <text evidence="2">Interacts with GTF2B (via C-terminus); this interaction is inhibited by SYMPK. Interacts with RB1. Interacts with CD226. Interacts with SYMPK.</text>
</comment>
<comment type="subcellular location">
    <subcellularLocation>
        <location evidence="1">Nucleus</location>
    </subcellularLocation>
    <subcellularLocation>
        <location evidence="1">Cytoplasm</location>
    </subcellularLocation>
    <text evidence="1">Predominantly in the cytosol.</text>
</comment>
<comment type="similarity">
    <text evidence="4">Belongs to the SSU72 phosphatase family.</text>
</comment>
<evidence type="ECO:0000250" key="1"/>
<evidence type="ECO:0000250" key="2">
    <source>
        <dbReference type="UniProtKB" id="Q9NP77"/>
    </source>
</evidence>
<evidence type="ECO:0000255" key="3"/>
<evidence type="ECO:0000305" key="4"/>
<sequence length="194" mass="22544">MPSSPLRVAVVCSSNQNRSMEAHNILSKRGFSVRSFGTGTHVKLPGPAPDKPNVYDFKTTYDQMYNDLLRKDKELYTQNGILHMLDRNKRIKPRPERFQNCKDLFDLILTCEERVYDQVVEDLNSREQETCQPVHVVNVDIQDNHEEATLGAFLICELCQCIQHTEDMENEIDELLQEFEEKSGRAFLHTVCFY</sequence>
<organism>
    <name type="scientific">Rattus norvegicus</name>
    <name type="common">Rat</name>
    <dbReference type="NCBI Taxonomy" id="10116"/>
    <lineage>
        <taxon>Eukaryota</taxon>
        <taxon>Metazoa</taxon>
        <taxon>Chordata</taxon>
        <taxon>Craniata</taxon>
        <taxon>Vertebrata</taxon>
        <taxon>Euteleostomi</taxon>
        <taxon>Mammalia</taxon>
        <taxon>Eutheria</taxon>
        <taxon>Euarchontoglires</taxon>
        <taxon>Glires</taxon>
        <taxon>Rodentia</taxon>
        <taxon>Myomorpha</taxon>
        <taxon>Muroidea</taxon>
        <taxon>Muridae</taxon>
        <taxon>Murinae</taxon>
        <taxon>Rattus</taxon>
    </lineage>
</organism>